<reference key="1">
    <citation type="journal article" date="1993" name="Gene">
        <title>The glutamate dehydrogenase-encoding gene of the hyperthermophilic archaeon Pyrococcus furiosus: sequence, transcription and analysis of the deduced amino acid sequence.</title>
        <authorList>
            <person name="Eggen R.I.L."/>
            <person name="Geerling A.C.M."/>
            <person name="Waldkoetter K."/>
            <person name="Antranikian G."/>
            <person name="de Vos W.M."/>
        </authorList>
    </citation>
    <scope>NUCLEOTIDE SEQUENCE [GENOMIC DNA]</scope>
    <source>
        <strain>ATCC 43587 / DSM 3638 / JCM 8422 / Vc1</strain>
    </source>
</reference>
<reference key="2">
    <citation type="journal article" date="1994" name="J. Protein Chem.">
        <title>The amino acid sequence of glutamate dehydrogenase from Pyrococcus furiosus, a hyperthermophilic archaebacterium.</title>
        <authorList>
            <person name="Maras B."/>
            <person name="Valiante S."/>
            <person name="Chiaraluce R."/>
            <person name="Consalvi V."/>
            <person name="Politi L."/>
            <person name="de Rosa M."/>
            <person name="Bossa F."/>
            <person name="Scandurra R."/>
            <person name="Barra D."/>
        </authorList>
    </citation>
    <scope>PROTEIN SEQUENCE</scope>
    <source>
        <strain>ATCC 43587 / DSM 3638 / JCM 8422 / Vc1</strain>
    </source>
</reference>
<reference key="3">
    <citation type="journal article" date="1999" name="Genetics">
        <title>Divergence of the hyperthermophilic archaea Pyrococcus furiosus and P. horikoshii inferred from complete genomic sequences.</title>
        <authorList>
            <person name="Maeder D.L."/>
            <person name="Weiss R.B."/>
            <person name="Dunn D.M."/>
            <person name="Cherry J.L."/>
            <person name="Gonzalez J.M."/>
            <person name="DiRuggiero J."/>
            <person name="Robb F.T."/>
        </authorList>
    </citation>
    <scope>NUCLEOTIDE SEQUENCE [LARGE SCALE GENOMIC DNA]</scope>
    <source>
        <strain>ATCC 43587 / DSM 3638 / JCM 8422 / Vc1</strain>
    </source>
</reference>
<reference key="4">
    <citation type="journal article" date="1995" name="Structure">
        <title>The structure of Pyrococcus furiosus glutamate dehydrogenase reveals a key role for ion-pair networks in maintaining enzyme stability at extreme temperatures.</title>
        <authorList>
            <person name="Yip K.S.P."/>
            <person name="Stillman T.J."/>
            <person name="Britton K.L."/>
            <person name="Artymiuk P.J."/>
            <person name="Baker P.J."/>
            <person name="Sedelnikova S.E."/>
            <person name="Engel P.C."/>
            <person name="Pasquo A."/>
            <person name="Chiaraluce R."/>
            <person name="Consalvi V."/>
            <person name="Scandurra R."/>
            <person name="Rice D.W."/>
        </authorList>
    </citation>
    <scope>X-RAY CRYSTALLOGRAPHY (2.2 ANGSTROMS)</scope>
    <source>
        <strain>ATCC 43587 / DSM 3638 / JCM 8422 / Vc1</strain>
    </source>
</reference>
<name>DHE3_PYRFU</name>
<dbReference type="EC" id="1.4.1.3"/>
<dbReference type="EMBL" id="M97860">
    <property type="protein sequence ID" value="AAA83390.1"/>
    <property type="molecule type" value="Genomic_DNA"/>
</dbReference>
<dbReference type="EMBL" id="AE009950">
    <property type="protein sequence ID" value="AAL81726.1"/>
    <property type="molecule type" value="Genomic_DNA"/>
</dbReference>
<dbReference type="PIR" id="T46971">
    <property type="entry name" value="JN0854"/>
</dbReference>
<dbReference type="RefSeq" id="WP_011012748.1">
    <property type="nucleotide sequence ID" value="NZ_CP023154.1"/>
</dbReference>
<dbReference type="PDB" id="1GTM">
    <property type="method" value="X-ray"/>
    <property type="resolution" value="2.20 A"/>
    <property type="chains" value="A/B/C=2-420"/>
</dbReference>
<dbReference type="PDBsum" id="1GTM"/>
<dbReference type="SMR" id="P80319"/>
<dbReference type="STRING" id="186497.PF1602"/>
<dbReference type="PaxDb" id="186497-PF1602"/>
<dbReference type="GeneID" id="41713426"/>
<dbReference type="KEGG" id="pfu:PF1602"/>
<dbReference type="PATRIC" id="fig|186497.12.peg.1668"/>
<dbReference type="eggNOG" id="arCOG01352">
    <property type="taxonomic scope" value="Archaea"/>
</dbReference>
<dbReference type="HOGENOM" id="CLU_025763_1_2_2"/>
<dbReference type="OrthoDB" id="6425at2157"/>
<dbReference type="PhylomeDB" id="P80319"/>
<dbReference type="BRENDA" id="1.4.1.3">
    <property type="organism ID" value="5243"/>
</dbReference>
<dbReference type="SABIO-RK" id="P80319"/>
<dbReference type="EvolutionaryTrace" id="P80319"/>
<dbReference type="Proteomes" id="UP000001013">
    <property type="component" value="Chromosome"/>
</dbReference>
<dbReference type="GO" id="GO:0005737">
    <property type="term" value="C:cytoplasm"/>
    <property type="evidence" value="ECO:0007669"/>
    <property type="project" value="UniProtKB-SubCell"/>
</dbReference>
<dbReference type="GO" id="GO:0004352">
    <property type="term" value="F:glutamate dehydrogenase (NAD+) activity"/>
    <property type="evidence" value="ECO:0007669"/>
    <property type="project" value="RHEA"/>
</dbReference>
<dbReference type="GO" id="GO:0004354">
    <property type="term" value="F:glutamate dehydrogenase (NADP+) activity"/>
    <property type="evidence" value="ECO:0007669"/>
    <property type="project" value="RHEA"/>
</dbReference>
<dbReference type="GO" id="GO:0006538">
    <property type="term" value="P:glutamate catabolic process"/>
    <property type="evidence" value="ECO:0007669"/>
    <property type="project" value="TreeGrafter"/>
</dbReference>
<dbReference type="CDD" id="cd01076">
    <property type="entry name" value="NAD_bind_1_Glu_DH"/>
    <property type="match status" value="1"/>
</dbReference>
<dbReference type="FunFam" id="3.40.50.10860:FF:000003">
    <property type="entry name" value="Glutamate dehydrogenase"/>
    <property type="match status" value="1"/>
</dbReference>
<dbReference type="Gene3D" id="3.40.50.10860">
    <property type="entry name" value="Leucine Dehydrogenase, chain A, domain 1"/>
    <property type="match status" value="1"/>
</dbReference>
<dbReference type="Gene3D" id="3.40.50.720">
    <property type="entry name" value="NAD(P)-binding Rossmann-like Domain"/>
    <property type="match status" value="1"/>
</dbReference>
<dbReference type="InterPro" id="IPR046346">
    <property type="entry name" value="Aminoacid_DH-like_N_sf"/>
</dbReference>
<dbReference type="InterPro" id="IPR053388">
    <property type="entry name" value="GLPV_dehydrogenases"/>
</dbReference>
<dbReference type="InterPro" id="IPR006095">
    <property type="entry name" value="Glu/Leu/Phe/Val/Trp_DH"/>
</dbReference>
<dbReference type="InterPro" id="IPR006096">
    <property type="entry name" value="Glu/Leu/Phe/Val/Trp_DH_C"/>
</dbReference>
<dbReference type="InterPro" id="IPR006097">
    <property type="entry name" value="Glu/Leu/Phe/Val/Trp_DH_dimer"/>
</dbReference>
<dbReference type="InterPro" id="IPR033524">
    <property type="entry name" value="Glu/Leu/Phe/Val_DH_AS"/>
</dbReference>
<dbReference type="InterPro" id="IPR014362">
    <property type="entry name" value="Glu_DH"/>
</dbReference>
<dbReference type="InterPro" id="IPR036291">
    <property type="entry name" value="NAD(P)-bd_dom_sf"/>
</dbReference>
<dbReference type="InterPro" id="IPR033922">
    <property type="entry name" value="NAD_bind_Glu_DH"/>
</dbReference>
<dbReference type="NCBIfam" id="NF040817">
    <property type="entry name" value="GdhA_Arch"/>
    <property type="match status" value="1"/>
</dbReference>
<dbReference type="PANTHER" id="PTHR11606">
    <property type="entry name" value="GLUTAMATE DEHYDROGENASE"/>
    <property type="match status" value="1"/>
</dbReference>
<dbReference type="PANTHER" id="PTHR11606:SF13">
    <property type="entry name" value="GLUTAMATE DEHYDROGENASE 1, MITOCHONDRIAL"/>
    <property type="match status" value="1"/>
</dbReference>
<dbReference type="Pfam" id="PF00208">
    <property type="entry name" value="ELFV_dehydrog"/>
    <property type="match status" value="1"/>
</dbReference>
<dbReference type="Pfam" id="PF02812">
    <property type="entry name" value="ELFV_dehydrog_N"/>
    <property type="match status" value="1"/>
</dbReference>
<dbReference type="PIRSF" id="PIRSF000185">
    <property type="entry name" value="Glu_DH"/>
    <property type="match status" value="1"/>
</dbReference>
<dbReference type="PRINTS" id="PR00082">
    <property type="entry name" value="GLFDHDRGNASE"/>
</dbReference>
<dbReference type="SMART" id="SM00839">
    <property type="entry name" value="ELFV_dehydrog"/>
    <property type="match status" value="1"/>
</dbReference>
<dbReference type="SUPFAM" id="SSF53223">
    <property type="entry name" value="Aminoacid dehydrogenase-like, N-terminal domain"/>
    <property type="match status" value="1"/>
</dbReference>
<dbReference type="SUPFAM" id="SSF51735">
    <property type="entry name" value="NAD(P)-binding Rossmann-fold domains"/>
    <property type="match status" value="1"/>
</dbReference>
<dbReference type="PROSITE" id="PS00074">
    <property type="entry name" value="GLFV_DEHYDROGENASE"/>
    <property type="match status" value="1"/>
</dbReference>
<comment type="catalytic activity">
    <reaction evidence="2">
        <text>L-glutamate + NAD(+) + H2O = 2-oxoglutarate + NH4(+) + NADH + H(+)</text>
        <dbReference type="Rhea" id="RHEA:15133"/>
        <dbReference type="ChEBI" id="CHEBI:15377"/>
        <dbReference type="ChEBI" id="CHEBI:15378"/>
        <dbReference type="ChEBI" id="CHEBI:16810"/>
        <dbReference type="ChEBI" id="CHEBI:28938"/>
        <dbReference type="ChEBI" id="CHEBI:29985"/>
        <dbReference type="ChEBI" id="CHEBI:57540"/>
        <dbReference type="ChEBI" id="CHEBI:57945"/>
        <dbReference type="EC" id="1.4.1.3"/>
    </reaction>
</comment>
<comment type="catalytic activity">
    <reaction evidence="2">
        <text>L-glutamate + NADP(+) + H2O = 2-oxoglutarate + NH4(+) + NADPH + H(+)</text>
        <dbReference type="Rhea" id="RHEA:11612"/>
        <dbReference type="ChEBI" id="CHEBI:15377"/>
        <dbReference type="ChEBI" id="CHEBI:15378"/>
        <dbReference type="ChEBI" id="CHEBI:16810"/>
        <dbReference type="ChEBI" id="CHEBI:28938"/>
        <dbReference type="ChEBI" id="CHEBI:29985"/>
        <dbReference type="ChEBI" id="CHEBI:57783"/>
        <dbReference type="ChEBI" id="CHEBI:58349"/>
        <dbReference type="EC" id="1.4.1.3"/>
    </reaction>
</comment>
<comment type="subunit">
    <text>Homohexamer.</text>
</comment>
<comment type="subcellular location">
    <subcellularLocation>
        <location>Cytoplasm</location>
    </subcellularLocation>
</comment>
<comment type="similarity">
    <text evidence="3">Belongs to the Glu/Leu/Phe/Val dehydrogenases family.</text>
</comment>
<organism>
    <name type="scientific">Pyrococcus furiosus (strain ATCC 43587 / DSM 3638 / JCM 8422 / Vc1)</name>
    <dbReference type="NCBI Taxonomy" id="186497"/>
    <lineage>
        <taxon>Archaea</taxon>
        <taxon>Methanobacteriati</taxon>
        <taxon>Methanobacteriota</taxon>
        <taxon>Thermococci</taxon>
        <taxon>Thermococcales</taxon>
        <taxon>Thermococcaceae</taxon>
        <taxon>Pyrococcus</taxon>
    </lineage>
</organism>
<gene>
    <name type="primary">gdhA</name>
    <name type="synonym">gdh</name>
    <name type="ordered locus">PF1602</name>
</gene>
<proteinExistence type="evidence at protein level"/>
<protein>
    <recommendedName>
        <fullName>Glutamate dehydrogenase</fullName>
        <shortName>GDH</shortName>
        <ecNumber>1.4.1.3</ecNumber>
    </recommendedName>
</protein>
<accession>P80319</accession>
<sequence length="420" mass="47114">MVEQDPYEIVIKQLERAAQYMEISEEALEFLKRPQRIVEVTIPVEMDDGSVKVFTGFRVQHNWARGPTKGGIRWHPEETLSTVKALAAWMTWKTAVMDLPYGGGKGGIIVDPKKLSDREKERLARGYIRAIYDVISPYEDIPAPDVYTNPQIMAWMMDEYETISRRKTPAFGIITGKPLSIGGSLGRIEATARGASYTIREAAKVLGWDTLKGKTIAIQGYGNAGYYLAKIMSEDFGMKVVAVSDSKGGIYNPDGLNADEVLKWKNEHGSVKDFPGATNITNEELLELEVDVLAPAAIEEVITKKNADNIKAKIVAEVANGPVTPEADEILFEKGILQIPDFLCNAGGVTVSYFEWVQNITGYYWTIEEVRERLDKKMTKAFYDVYNIAKEKNIHMRDAAYVVAVQRVYQAMLDRGWVKH</sequence>
<evidence type="ECO:0000255" key="1"/>
<evidence type="ECO:0000255" key="2">
    <source>
        <dbReference type="PROSITE-ProRule" id="PRU10011"/>
    </source>
</evidence>
<evidence type="ECO:0000305" key="3"/>
<evidence type="ECO:0007829" key="4">
    <source>
        <dbReference type="PDB" id="1GTM"/>
    </source>
</evidence>
<feature type="chain" id="PRO_0000182757" description="Glutamate dehydrogenase">
    <location>
        <begin position="1"/>
        <end position="420"/>
    </location>
</feature>
<feature type="active site">
    <location>
        <position position="105"/>
    </location>
</feature>
<feature type="binding site" evidence="1">
    <location>
        <begin position="220"/>
        <end position="226"/>
    </location>
    <ligand>
        <name>NAD(+)</name>
        <dbReference type="ChEBI" id="CHEBI:57540"/>
    </ligand>
</feature>
<feature type="sequence conflict" description="In Ref. 2; AA sequence." evidence="3" ref="2">
    <original>AW</original>
    <variation>WA</variation>
    <location>
        <begin position="88"/>
        <end position="89"/>
    </location>
</feature>
<feature type="sequence conflict" description="In Ref. 2; AA sequence." evidence="3" ref="2">
    <original>T</original>
    <variation>K</variation>
    <location>
        <position position="366"/>
    </location>
</feature>
<feature type="helix" evidence="4">
    <location>
        <begin position="6"/>
        <end position="17"/>
    </location>
</feature>
<feature type="helix" evidence="4">
    <location>
        <begin position="18"/>
        <end position="20"/>
    </location>
</feature>
<feature type="helix" evidence="4">
    <location>
        <begin position="25"/>
        <end position="31"/>
    </location>
</feature>
<feature type="strand" evidence="4">
    <location>
        <begin position="35"/>
        <end position="45"/>
    </location>
</feature>
<feature type="strand" evidence="4">
    <location>
        <begin position="51"/>
        <end position="62"/>
    </location>
</feature>
<feature type="strand" evidence="4">
    <location>
        <begin position="66"/>
        <end position="69"/>
    </location>
</feature>
<feature type="strand" evidence="4">
    <location>
        <begin position="72"/>
        <end position="74"/>
    </location>
</feature>
<feature type="helix" evidence="4">
    <location>
        <begin position="80"/>
        <end position="96"/>
    </location>
</feature>
<feature type="strand" evidence="4">
    <location>
        <begin position="102"/>
        <end position="109"/>
    </location>
</feature>
<feature type="helix" evidence="4">
    <location>
        <begin position="112"/>
        <end position="114"/>
    </location>
</feature>
<feature type="helix" evidence="4">
    <location>
        <begin position="117"/>
        <end position="131"/>
    </location>
</feature>
<feature type="helix" evidence="4">
    <location>
        <begin position="132"/>
        <end position="134"/>
    </location>
</feature>
<feature type="turn" evidence="4">
    <location>
        <begin position="137"/>
        <end position="139"/>
    </location>
</feature>
<feature type="helix" evidence="4">
    <location>
        <begin position="150"/>
        <end position="164"/>
    </location>
</feature>
<feature type="helix" evidence="4">
    <location>
        <begin position="170"/>
        <end position="173"/>
    </location>
</feature>
<feature type="helix" evidence="4">
    <location>
        <begin position="179"/>
        <end position="181"/>
    </location>
</feature>
<feature type="turn" evidence="4">
    <location>
        <begin position="185"/>
        <end position="189"/>
    </location>
</feature>
<feature type="helix" evidence="4">
    <location>
        <begin position="190"/>
        <end position="205"/>
    </location>
</feature>
<feature type="strand" evidence="4">
    <location>
        <begin position="215"/>
        <end position="219"/>
    </location>
</feature>
<feature type="helix" evidence="4">
    <location>
        <begin position="223"/>
        <end position="234"/>
    </location>
</feature>
<feature type="strand" evidence="4">
    <location>
        <begin position="239"/>
        <end position="244"/>
    </location>
</feature>
<feature type="strand" evidence="4">
    <location>
        <begin position="249"/>
        <end position="256"/>
    </location>
</feature>
<feature type="helix" evidence="4">
    <location>
        <begin position="258"/>
        <end position="268"/>
    </location>
</feature>
<feature type="strand" evidence="4">
    <location>
        <begin position="269"/>
        <end position="271"/>
    </location>
</feature>
<feature type="strand" evidence="4">
    <location>
        <begin position="277"/>
        <end position="280"/>
    </location>
</feature>
<feature type="helix" evidence="4">
    <location>
        <begin position="282"/>
        <end position="287"/>
    </location>
</feature>
<feature type="strand" evidence="4">
    <location>
        <begin position="291"/>
        <end position="295"/>
    </location>
</feature>
<feature type="helix" evidence="4">
    <location>
        <begin position="306"/>
        <end position="309"/>
    </location>
</feature>
<feature type="strand" evidence="4">
    <location>
        <begin position="313"/>
        <end position="316"/>
    </location>
</feature>
<feature type="strand" evidence="4">
    <location>
        <begin position="319"/>
        <end position="321"/>
    </location>
</feature>
<feature type="helix" evidence="4">
    <location>
        <begin position="325"/>
        <end position="333"/>
    </location>
</feature>
<feature type="strand" evidence="4">
    <location>
        <begin position="337"/>
        <end position="339"/>
    </location>
</feature>
<feature type="helix" evidence="4">
    <location>
        <begin position="341"/>
        <end position="344"/>
    </location>
</feature>
<feature type="helix" evidence="4">
    <location>
        <begin position="347"/>
        <end position="361"/>
    </location>
</feature>
<feature type="helix" evidence="4">
    <location>
        <begin position="367"/>
        <end position="391"/>
    </location>
</feature>
<feature type="helix" evidence="4">
    <location>
        <begin position="396"/>
        <end position="414"/>
    </location>
</feature>
<keyword id="KW-0002">3D-structure</keyword>
<keyword id="KW-0963">Cytoplasm</keyword>
<keyword id="KW-0903">Direct protein sequencing</keyword>
<keyword id="KW-0520">NAD</keyword>
<keyword id="KW-0521">NADP</keyword>
<keyword id="KW-0560">Oxidoreductase</keyword>
<keyword id="KW-1185">Reference proteome</keyword>